<gene>
    <name type="primary">SSPN</name>
</gene>
<evidence type="ECO:0000255" key="1"/>
<evidence type="ECO:0000256" key="2">
    <source>
        <dbReference type="SAM" id="MobiDB-lite"/>
    </source>
</evidence>
<name>SSPN_RABIT</name>
<protein>
    <recommendedName>
        <fullName>Sarcospan</fullName>
    </recommendedName>
</protein>
<sequence length="238" mass="26036">MGKDRQPRGQQRQGDAAGPDDPGPKKGAGTREQRGEEEAQTCCGCRFPLLLALLQLALGVAVTVVGFLMASVSSSLLVRATPYWAGIIVCVVAYLGLFMLCVSYQVDERTCIQFSMKLLYFVLSALGLVVCVLAVAFAAHHYSLLTHLTCENAPDSCQCKLPSSEPLSRTFVYRDVTDCTSITGTFQVFLLVQMVLNLVCGLVCLVACFVMWKHRYQVFYVGVRMCPLSASEGQQQKV</sequence>
<accession>P82352</accession>
<keyword id="KW-0002">3D-structure</keyword>
<keyword id="KW-1003">Cell membrane</keyword>
<keyword id="KW-0903">Direct protein sequencing</keyword>
<keyword id="KW-0472">Membrane</keyword>
<keyword id="KW-0628">Postsynaptic cell membrane</keyword>
<keyword id="KW-1185">Reference proteome</keyword>
<keyword id="KW-0770">Synapse</keyword>
<keyword id="KW-0812">Transmembrane</keyword>
<keyword id="KW-1133">Transmembrane helix</keyword>
<dbReference type="EMBL" id="AF120276">
    <property type="protein sequence ID" value="AAD49805.1"/>
    <property type="molecule type" value="mRNA"/>
</dbReference>
<dbReference type="RefSeq" id="NP_001075519.1">
    <property type="nucleotide sequence ID" value="NM_001082050.1"/>
</dbReference>
<dbReference type="PDB" id="9C3C">
    <property type="method" value="EM"/>
    <property type="resolution" value="4.30 A"/>
    <property type="chains" value="n=1-238"/>
</dbReference>
<dbReference type="PDBsum" id="9C3C"/>
<dbReference type="EMDB" id="EMD-45165"/>
<dbReference type="SMR" id="P82352"/>
<dbReference type="CORUM" id="P82352"/>
<dbReference type="FunCoup" id="P82352">
    <property type="interactions" value="177"/>
</dbReference>
<dbReference type="STRING" id="9986.ENSOCUP00000009246"/>
<dbReference type="PaxDb" id="9986-ENSOCUP00000009246"/>
<dbReference type="GeneID" id="100008714"/>
<dbReference type="KEGG" id="ocu:100008714"/>
<dbReference type="CTD" id="8082"/>
<dbReference type="eggNOG" id="ENOG502RYPH">
    <property type="taxonomic scope" value="Eukaryota"/>
</dbReference>
<dbReference type="InParanoid" id="P82352"/>
<dbReference type="OrthoDB" id="10027693at2759"/>
<dbReference type="Proteomes" id="UP000001811">
    <property type="component" value="Unplaced"/>
</dbReference>
<dbReference type="GO" id="GO:0016010">
    <property type="term" value="C:dystrophin-associated glycoprotein complex"/>
    <property type="evidence" value="ECO:0007669"/>
    <property type="project" value="InterPro"/>
</dbReference>
<dbReference type="GO" id="GO:0045211">
    <property type="term" value="C:postsynaptic membrane"/>
    <property type="evidence" value="ECO:0007669"/>
    <property type="project" value="UniProtKB-SubCell"/>
</dbReference>
<dbReference type="GO" id="GO:0042383">
    <property type="term" value="C:sarcolemma"/>
    <property type="evidence" value="ECO:0007669"/>
    <property type="project" value="UniProtKB-SubCell"/>
</dbReference>
<dbReference type="InterPro" id="IPR007237">
    <property type="entry name" value="CD20-like"/>
</dbReference>
<dbReference type="InterPro" id="IPR030429">
    <property type="entry name" value="Sarcospan"/>
</dbReference>
<dbReference type="PANTHER" id="PTHR15260">
    <property type="entry name" value="SARCOSPAN"/>
    <property type="match status" value="1"/>
</dbReference>
<dbReference type="PANTHER" id="PTHR15260:SF1">
    <property type="entry name" value="SARCOSPAN"/>
    <property type="match status" value="1"/>
</dbReference>
<dbReference type="Pfam" id="PF04103">
    <property type="entry name" value="CD20"/>
    <property type="match status" value="1"/>
</dbReference>
<organism>
    <name type="scientific">Oryctolagus cuniculus</name>
    <name type="common">Rabbit</name>
    <dbReference type="NCBI Taxonomy" id="9986"/>
    <lineage>
        <taxon>Eukaryota</taxon>
        <taxon>Metazoa</taxon>
        <taxon>Chordata</taxon>
        <taxon>Craniata</taxon>
        <taxon>Vertebrata</taxon>
        <taxon>Euteleostomi</taxon>
        <taxon>Mammalia</taxon>
        <taxon>Eutheria</taxon>
        <taxon>Euarchontoglires</taxon>
        <taxon>Glires</taxon>
        <taxon>Lagomorpha</taxon>
        <taxon>Leporidae</taxon>
        <taxon>Oryctolagus</taxon>
    </lineage>
</organism>
<comment type="function">
    <text>Component of the dystrophin-glycoprotein complex (DGC), a complex that spans the muscle plasma membrane and forms a link between the F-actin cytoskeleton and the extracellular matrix. Preferentially associates with the sarcoglycan subcomplex of the DGC.</text>
</comment>
<comment type="subcellular location">
    <subcellularLocation>
        <location>Cell membrane</location>
        <topology>Multi-pass membrane protein</topology>
    </subcellularLocation>
    <subcellularLocation>
        <location>Cell membrane</location>
        <location>Sarcolemma</location>
    </subcellularLocation>
    <subcellularLocation>
        <location>Postsynaptic cell membrane</location>
    </subcellularLocation>
    <text>Also found in myotendinous junctions and in the postsynaptic membrane of neuromuscular junctions.</text>
</comment>
<proteinExistence type="evidence at protein level"/>
<reference key="1">
    <citation type="journal article" date="1999" name="J. Cell Biol.">
        <title>Membrane targeting and stabilization of sarcospan is mediated by the sarcoglycan subcomplex.</title>
        <authorList>
            <person name="Crosbie R.H."/>
            <person name="Lebakken C.S."/>
            <person name="Holt K.H."/>
            <person name="Venzke D.P."/>
            <person name="Straub V."/>
            <person name="Lee J.C."/>
            <person name="Grady R.M."/>
            <person name="Chamberlain J.S."/>
            <person name="Sanes J.R."/>
            <person name="Campbell K.P."/>
        </authorList>
    </citation>
    <scope>NUCLEOTIDE SEQUENCE [MRNA]</scope>
    <source>
        <tissue>Skeletal muscle</tissue>
    </source>
</reference>
<reference key="2">
    <citation type="journal article" date="1997" name="J. Biol. Chem.">
        <title>Sarcospan, the 25-kDa transmembrane component of the dystrophin-glycoprotein complex.</title>
        <authorList>
            <person name="Crosbie R.H."/>
            <person name="Heighway J."/>
            <person name="Venzke D.P."/>
            <person name="Lee J.C."/>
            <person name="Campbell K.P."/>
        </authorList>
    </citation>
    <scope>NUCLEOTIDE SEQUENCE [MRNA] OF 3-23</scope>
    <scope>PROTEIN SEQUENCE OF 3-23 AND 213-223</scope>
    <source>
        <tissue>Skeletal muscle</tissue>
    </source>
</reference>
<feature type="chain" id="PRO_0000072228" description="Sarcospan">
    <location>
        <begin position="1"/>
        <end position="238"/>
    </location>
</feature>
<feature type="topological domain" description="Extracellular" evidence="1">
    <location>
        <begin position="1"/>
        <end position="48"/>
    </location>
</feature>
<feature type="transmembrane region" description="Helical" evidence="1">
    <location>
        <begin position="49"/>
        <end position="69"/>
    </location>
</feature>
<feature type="topological domain" description="Cytoplasmic" evidence="1">
    <location>
        <begin position="70"/>
        <end position="81"/>
    </location>
</feature>
<feature type="transmembrane region" description="Helical" evidence="1">
    <location>
        <begin position="82"/>
        <end position="102"/>
    </location>
</feature>
<feature type="topological domain" description="Cytoplasmic" evidence="1">
    <location>
        <begin position="103"/>
        <end position="117"/>
    </location>
</feature>
<feature type="transmembrane region" description="Helical" evidence="1">
    <location>
        <begin position="118"/>
        <end position="138"/>
    </location>
</feature>
<feature type="topological domain" description="Extracellular" evidence="1">
    <location>
        <begin position="139"/>
        <end position="188"/>
    </location>
</feature>
<feature type="transmembrane region" description="Helical" evidence="1">
    <location>
        <begin position="189"/>
        <end position="209"/>
    </location>
</feature>
<feature type="topological domain" description="Cytoplasmic" evidence="1">
    <location>
        <begin position="210"/>
        <end position="238"/>
    </location>
</feature>
<feature type="region of interest" description="Disordered" evidence="2">
    <location>
        <begin position="1"/>
        <end position="33"/>
    </location>
</feature>
<feature type="compositionally biased region" description="Low complexity" evidence="2">
    <location>
        <begin position="8"/>
        <end position="20"/>
    </location>
</feature>